<protein>
    <recommendedName>
        <fullName evidence="1">Translation initiation factor IF-3</fullName>
    </recommendedName>
</protein>
<organism>
    <name type="scientific">Streptococcus agalactiae serotype III (strain NEM316)</name>
    <dbReference type="NCBI Taxonomy" id="211110"/>
    <lineage>
        <taxon>Bacteria</taxon>
        <taxon>Bacillati</taxon>
        <taxon>Bacillota</taxon>
        <taxon>Bacilli</taxon>
        <taxon>Lactobacillales</taxon>
        <taxon>Streptococcaceae</taxon>
        <taxon>Streptococcus</taxon>
    </lineage>
</organism>
<keyword id="KW-0963">Cytoplasm</keyword>
<keyword id="KW-0396">Initiation factor</keyword>
<keyword id="KW-0648">Protein biosynthesis</keyword>
<name>IF3_STRA3</name>
<reference key="1">
    <citation type="journal article" date="2002" name="Mol. Microbiol.">
        <title>Genome sequence of Streptococcus agalactiae, a pathogen causing invasive neonatal disease.</title>
        <authorList>
            <person name="Glaser P."/>
            <person name="Rusniok C."/>
            <person name="Buchrieser C."/>
            <person name="Chevalier F."/>
            <person name="Frangeul L."/>
            <person name="Msadek T."/>
            <person name="Zouine M."/>
            <person name="Couve E."/>
            <person name="Lalioui L."/>
            <person name="Poyart C."/>
            <person name="Trieu-Cuot P."/>
            <person name="Kunst F."/>
        </authorList>
    </citation>
    <scope>NUCLEOTIDE SEQUENCE [LARGE SCALE GENOMIC DNA]</scope>
    <source>
        <strain>NEM316</strain>
    </source>
</reference>
<accession>P65142</accession>
<accession>Q8DYT9</accession>
<accession>Q8E4E7</accession>
<evidence type="ECO:0000255" key="1">
    <source>
        <dbReference type="HAMAP-Rule" id="MF_00080"/>
    </source>
</evidence>
<proteinExistence type="inferred from homology"/>
<feature type="chain" id="PRO_0000177583" description="Translation initiation factor IF-3">
    <location>
        <begin position="1"/>
        <end position="176"/>
    </location>
</feature>
<sequence length="176" mass="20092">MKIIAKKDLFINDEIRVREVRLVGLEGEQLGIKPLSEAQAIADDANVDLVLIQPQATPPVAKIMDYGKFKFEYQKKQKEQRKKQSVVTVKEVRLSPVIDKGDFETKLRNGRKFLEKGNKVKVSIRFKGRMITHKEIGAKVLAEFAEATQDIAIIEQRAKMDGRQMFMQLAPIPDKK</sequence>
<gene>
    <name evidence="1" type="primary">infC</name>
    <name type="ordered locus">gbs1454</name>
</gene>
<comment type="function">
    <text evidence="1">IF-3 binds to the 30S ribosomal subunit and shifts the equilibrium between 70S ribosomes and their 50S and 30S subunits in favor of the free subunits, thus enhancing the availability of 30S subunits on which protein synthesis initiation begins.</text>
</comment>
<comment type="subunit">
    <text evidence="1">Monomer.</text>
</comment>
<comment type="subcellular location">
    <subcellularLocation>
        <location evidence="1">Cytoplasm</location>
    </subcellularLocation>
</comment>
<comment type="similarity">
    <text evidence="1">Belongs to the IF-3 family.</text>
</comment>
<dbReference type="EMBL" id="AL766850">
    <property type="protein sequence ID" value="CAD47113.1"/>
    <property type="molecule type" value="Genomic_DNA"/>
</dbReference>
<dbReference type="RefSeq" id="WP_000691023.1">
    <property type="nucleotide sequence ID" value="NC_004368.1"/>
</dbReference>
<dbReference type="SMR" id="P65142"/>
<dbReference type="GeneID" id="66886260"/>
<dbReference type="KEGG" id="san:infC"/>
<dbReference type="eggNOG" id="COG0290">
    <property type="taxonomic scope" value="Bacteria"/>
</dbReference>
<dbReference type="HOGENOM" id="CLU_054919_3_2_9"/>
<dbReference type="Proteomes" id="UP000000823">
    <property type="component" value="Chromosome"/>
</dbReference>
<dbReference type="GO" id="GO:0005829">
    <property type="term" value="C:cytosol"/>
    <property type="evidence" value="ECO:0007669"/>
    <property type="project" value="TreeGrafter"/>
</dbReference>
<dbReference type="GO" id="GO:0016020">
    <property type="term" value="C:membrane"/>
    <property type="evidence" value="ECO:0007669"/>
    <property type="project" value="TreeGrafter"/>
</dbReference>
<dbReference type="GO" id="GO:0043022">
    <property type="term" value="F:ribosome binding"/>
    <property type="evidence" value="ECO:0007669"/>
    <property type="project" value="TreeGrafter"/>
</dbReference>
<dbReference type="GO" id="GO:0003743">
    <property type="term" value="F:translation initiation factor activity"/>
    <property type="evidence" value="ECO:0007669"/>
    <property type="project" value="UniProtKB-UniRule"/>
</dbReference>
<dbReference type="GO" id="GO:0032790">
    <property type="term" value="P:ribosome disassembly"/>
    <property type="evidence" value="ECO:0007669"/>
    <property type="project" value="TreeGrafter"/>
</dbReference>
<dbReference type="FunFam" id="3.10.20.80:FF:000001">
    <property type="entry name" value="Translation initiation factor IF-3"/>
    <property type="match status" value="1"/>
</dbReference>
<dbReference type="FunFam" id="3.30.110.10:FF:000001">
    <property type="entry name" value="Translation initiation factor IF-3"/>
    <property type="match status" value="1"/>
</dbReference>
<dbReference type="Gene3D" id="3.30.110.10">
    <property type="entry name" value="Translation initiation factor 3 (IF-3), C-terminal domain"/>
    <property type="match status" value="1"/>
</dbReference>
<dbReference type="Gene3D" id="3.10.20.80">
    <property type="entry name" value="Translation initiation factor 3 (IF-3), N-terminal domain"/>
    <property type="match status" value="1"/>
</dbReference>
<dbReference type="HAMAP" id="MF_00080">
    <property type="entry name" value="IF_3"/>
    <property type="match status" value="1"/>
</dbReference>
<dbReference type="InterPro" id="IPR036788">
    <property type="entry name" value="T_IF-3_C_sf"/>
</dbReference>
<dbReference type="InterPro" id="IPR036787">
    <property type="entry name" value="T_IF-3_N_sf"/>
</dbReference>
<dbReference type="InterPro" id="IPR019813">
    <property type="entry name" value="Translation_initiation_fac3_CS"/>
</dbReference>
<dbReference type="InterPro" id="IPR001288">
    <property type="entry name" value="Translation_initiation_fac_3"/>
</dbReference>
<dbReference type="InterPro" id="IPR019815">
    <property type="entry name" value="Translation_initiation_fac_3_C"/>
</dbReference>
<dbReference type="InterPro" id="IPR019814">
    <property type="entry name" value="Translation_initiation_fac_3_N"/>
</dbReference>
<dbReference type="NCBIfam" id="TIGR00168">
    <property type="entry name" value="infC"/>
    <property type="match status" value="1"/>
</dbReference>
<dbReference type="PANTHER" id="PTHR10938">
    <property type="entry name" value="TRANSLATION INITIATION FACTOR IF-3"/>
    <property type="match status" value="1"/>
</dbReference>
<dbReference type="PANTHER" id="PTHR10938:SF0">
    <property type="entry name" value="TRANSLATION INITIATION FACTOR IF-3, MITOCHONDRIAL"/>
    <property type="match status" value="1"/>
</dbReference>
<dbReference type="Pfam" id="PF00707">
    <property type="entry name" value="IF3_C"/>
    <property type="match status" value="1"/>
</dbReference>
<dbReference type="Pfam" id="PF05198">
    <property type="entry name" value="IF3_N"/>
    <property type="match status" value="1"/>
</dbReference>
<dbReference type="SUPFAM" id="SSF55200">
    <property type="entry name" value="Translation initiation factor IF3, C-terminal domain"/>
    <property type="match status" value="1"/>
</dbReference>
<dbReference type="SUPFAM" id="SSF54364">
    <property type="entry name" value="Translation initiation factor IF3, N-terminal domain"/>
    <property type="match status" value="1"/>
</dbReference>
<dbReference type="PROSITE" id="PS00938">
    <property type="entry name" value="IF3"/>
    <property type="match status" value="1"/>
</dbReference>